<accession>Q9BVV6</accession>
<accession>B4DZB6</accession>
<accession>E7EWM8</accession>
<accession>J3KQH9</accession>
<accession>O60328</accession>
<accession>Q6NYC6</accession>
<accession>Q6UV20</accession>
<evidence type="ECO:0000250" key="1"/>
<evidence type="ECO:0000250" key="2">
    <source>
        <dbReference type="UniProtKB" id="E9PV87"/>
    </source>
</evidence>
<evidence type="ECO:0000250" key="3">
    <source>
        <dbReference type="UniProtKB" id="Q1G7G9"/>
    </source>
</evidence>
<evidence type="ECO:0000255" key="4"/>
<evidence type="ECO:0000256" key="5">
    <source>
        <dbReference type="SAM" id="MobiDB-lite"/>
    </source>
</evidence>
<evidence type="ECO:0000269" key="6">
    <source>
    </source>
</evidence>
<evidence type="ECO:0000269" key="7">
    <source>
    </source>
</evidence>
<evidence type="ECO:0000269" key="8">
    <source>
    </source>
</evidence>
<evidence type="ECO:0000269" key="9">
    <source>
    </source>
</evidence>
<evidence type="ECO:0000269" key="10">
    <source>
    </source>
</evidence>
<evidence type="ECO:0000269" key="11">
    <source>
    </source>
</evidence>
<evidence type="ECO:0000269" key="12">
    <source>
    </source>
</evidence>
<evidence type="ECO:0000269" key="13">
    <source>
    </source>
</evidence>
<evidence type="ECO:0000269" key="14">
    <source>
    </source>
</evidence>
<evidence type="ECO:0000269" key="15">
    <source>
    </source>
</evidence>
<evidence type="ECO:0000269" key="16">
    <source>
    </source>
</evidence>
<evidence type="ECO:0000269" key="17">
    <source ref="1"/>
</evidence>
<evidence type="ECO:0000269" key="18">
    <source ref="5"/>
</evidence>
<evidence type="ECO:0000303" key="19">
    <source>
    </source>
</evidence>
<evidence type="ECO:0000303" key="20">
    <source>
    </source>
</evidence>
<evidence type="ECO:0000303" key="21">
    <source ref="1"/>
</evidence>
<evidence type="ECO:0000305" key="22"/>
<evidence type="ECO:0007744" key="23">
    <source>
    </source>
</evidence>
<dbReference type="EMBL" id="AY359881">
    <property type="protein sequence ID" value="AAQ63404.1"/>
    <property type="molecule type" value="mRNA"/>
</dbReference>
<dbReference type="EMBL" id="AB011158">
    <property type="protein sequence ID" value="BAA25512.2"/>
    <property type="status" value="ALT_INIT"/>
    <property type="molecule type" value="mRNA"/>
</dbReference>
<dbReference type="EMBL" id="AK302836">
    <property type="protein sequence ID" value="BAG64028.1"/>
    <property type="molecule type" value="mRNA"/>
</dbReference>
<dbReference type="EMBL" id="AL135752">
    <property type="status" value="NOT_ANNOTATED_CDS"/>
    <property type="molecule type" value="Genomic_DNA"/>
</dbReference>
<dbReference type="EMBL" id="AL139021">
    <property type="status" value="NOT_ANNOTATED_CDS"/>
    <property type="molecule type" value="Genomic_DNA"/>
</dbReference>
<dbReference type="EMBL" id="CH471061">
    <property type="protein sequence ID" value="EAW80740.1"/>
    <property type="molecule type" value="Genomic_DNA"/>
</dbReference>
<dbReference type="EMBL" id="BC000900">
    <property type="protein sequence ID" value="AAH00900.1"/>
    <property type="molecule type" value="mRNA"/>
</dbReference>
<dbReference type="EMBL" id="BC066647">
    <property type="protein sequence ID" value="AAH66647.2"/>
    <property type="molecule type" value="mRNA"/>
</dbReference>
<dbReference type="CCDS" id="CCDS45115.1">
    <molecule id="Q9BVV6-2"/>
</dbReference>
<dbReference type="CCDS" id="CCDS58320.1">
    <molecule id="Q9BVV6-3"/>
</dbReference>
<dbReference type="CCDS" id="CCDS58321.1">
    <molecule id="Q9BVV6-1"/>
</dbReference>
<dbReference type="CCDS" id="CCDS58322.1">
    <molecule id="Q9BVV6-4"/>
</dbReference>
<dbReference type="PIR" id="T00344">
    <property type="entry name" value="T00344"/>
</dbReference>
<dbReference type="RefSeq" id="NP_001231118.1">
    <molecule id="Q9BVV6-3"/>
    <property type="nucleotide sequence ID" value="NM_001244189.2"/>
</dbReference>
<dbReference type="RefSeq" id="NP_001231119.1">
    <molecule id="Q9BVV6-1"/>
    <property type="nucleotide sequence ID" value="NM_001244190.2"/>
</dbReference>
<dbReference type="RefSeq" id="NP_001231120.1">
    <property type="nucleotide sequence ID" value="NM_001244191.1"/>
</dbReference>
<dbReference type="RefSeq" id="NP_001231121.1">
    <molecule id="Q9BVV6-4"/>
    <property type="nucleotide sequence ID" value="NM_001244192.2"/>
</dbReference>
<dbReference type="RefSeq" id="NP_001231122.1">
    <property type="nucleotide sequence ID" value="NM_001244193.1"/>
</dbReference>
<dbReference type="RefSeq" id="NP_055564.3">
    <molecule id="Q9BVV6-2"/>
    <property type="nucleotide sequence ID" value="NM_014749.4"/>
</dbReference>
<dbReference type="SMR" id="Q9BVV6"/>
<dbReference type="BioGRID" id="115130">
    <property type="interactions" value="26"/>
</dbReference>
<dbReference type="FunCoup" id="Q9BVV6">
    <property type="interactions" value="1560"/>
</dbReference>
<dbReference type="IntAct" id="Q9BVV6">
    <property type="interactions" value="21"/>
</dbReference>
<dbReference type="MINT" id="Q9BVV6"/>
<dbReference type="STRING" id="9606.ENSP00000346359"/>
<dbReference type="GlyGen" id="Q9BVV6">
    <property type="glycosylation" value="5 sites, 2 N-linked glycans (2 sites)"/>
</dbReference>
<dbReference type="iPTMnet" id="Q9BVV6"/>
<dbReference type="PhosphoSitePlus" id="Q9BVV6"/>
<dbReference type="BioMuta" id="KIAA0586"/>
<dbReference type="DMDM" id="327478601"/>
<dbReference type="jPOST" id="Q9BVV6"/>
<dbReference type="MassIVE" id="Q9BVV6"/>
<dbReference type="PaxDb" id="9606-ENSP00000346359"/>
<dbReference type="PeptideAtlas" id="Q9BVV6"/>
<dbReference type="ProteomicsDB" id="18876"/>
<dbReference type="ProteomicsDB" id="79236">
    <molecule id="Q9BVV6-1"/>
</dbReference>
<dbReference type="ProteomicsDB" id="79237">
    <molecule id="Q9BVV6-2"/>
</dbReference>
<dbReference type="Pumba" id="Q9BVV6"/>
<dbReference type="Antibodypedia" id="21">
    <property type="antibodies" value="15 antibodies from 11 providers"/>
</dbReference>
<dbReference type="DNASU" id="9786"/>
<dbReference type="Ensembl" id="ENST00000261244.9">
    <molecule id="Q9BVV6-2"/>
    <property type="protein sequence ID" value="ENSP00000261244.5"/>
    <property type="gene ID" value="ENSG00000100578.18"/>
</dbReference>
<dbReference type="Ensembl" id="ENST00000354386.10">
    <molecule id="Q9BVV6-3"/>
    <property type="protein sequence ID" value="ENSP00000346359.6"/>
    <property type="gene ID" value="ENSG00000100578.18"/>
</dbReference>
<dbReference type="Ensembl" id="ENST00000423743.7">
    <molecule id="Q9BVV6-4"/>
    <property type="protein sequence ID" value="ENSP00000399427.3"/>
    <property type="gene ID" value="ENSG00000100578.18"/>
</dbReference>
<dbReference type="Ensembl" id="ENST00000619416.4">
    <molecule id="Q9BVV6-1"/>
    <property type="protein sequence ID" value="ENSP00000478083.1"/>
    <property type="gene ID" value="ENSG00000100578.18"/>
</dbReference>
<dbReference type="GeneID" id="9786"/>
<dbReference type="KEGG" id="hsa:9786"/>
<dbReference type="UCSC" id="uc001xdt.5">
    <molecule id="Q9BVV6-1"/>
    <property type="organism name" value="human"/>
</dbReference>
<dbReference type="AGR" id="HGNC:19960"/>
<dbReference type="CTD" id="9786"/>
<dbReference type="DisGeNET" id="9786"/>
<dbReference type="GeneCards" id="KIAA0586"/>
<dbReference type="GeneReviews" id="KIAA0586"/>
<dbReference type="HGNC" id="HGNC:19960">
    <property type="gene designation" value="KIAA0586"/>
</dbReference>
<dbReference type="HPA" id="ENSG00000100578">
    <property type="expression patterns" value="Low tissue specificity"/>
</dbReference>
<dbReference type="MalaCards" id="KIAA0586"/>
<dbReference type="MIM" id="610178">
    <property type="type" value="gene"/>
</dbReference>
<dbReference type="MIM" id="616490">
    <property type="type" value="phenotype"/>
</dbReference>
<dbReference type="MIM" id="616546">
    <property type="type" value="phenotype"/>
</dbReference>
<dbReference type="neXtProt" id="NX_Q9BVV6"/>
<dbReference type="OpenTargets" id="ENSG00000100578"/>
<dbReference type="Orphanet" id="475">
    <property type="disease" value="Joubert syndrome"/>
</dbReference>
<dbReference type="Orphanet" id="397715">
    <property type="disease" value="Joubert syndrome with Jeune asphyxiating thoracic dystrophy"/>
</dbReference>
<dbReference type="PharmGKB" id="PA134992213"/>
<dbReference type="VEuPathDB" id="HostDB:ENSG00000100578"/>
<dbReference type="eggNOG" id="ENOG502QUXJ">
    <property type="taxonomic scope" value="Eukaryota"/>
</dbReference>
<dbReference type="GeneTree" id="ENSGT00390000012397"/>
<dbReference type="InParanoid" id="Q9BVV6"/>
<dbReference type="OrthoDB" id="10057439at2759"/>
<dbReference type="PAN-GO" id="Q9BVV6">
    <property type="GO annotations" value="3 GO annotations based on evolutionary models"/>
</dbReference>
<dbReference type="PhylomeDB" id="Q9BVV6"/>
<dbReference type="TreeFam" id="TF332939"/>
<dbReference type="PathwayCommons" id="Q9BVV6"/>
<dbReference type="SignaLink" id="Q9BVV6"/>
<dbReference type="BioGRID-ORCS" id="9786">
    <property type="hits" value="14 hits in 1156 CRISPR screens"/>
</dbReference>
<dbReference type="CD-CODE" id="8C2F96ED">
    <property type="entry name" value="Centrosome"/>
</dbReference>
<dbReference type="ChiTaRS" id="KIAA0586">
    <property type="organism name" value="human"/>
</dbReference>
<dbReference type="GenomeRNAi" id="9786"/>
<dbReference type="Pharos" id="Q9BVV6">
    <property type="development level" value="Tbio"/>
</dbReference>
<dbReference type="PRO" id="PR:Q9BVV6"/>
<dbReference type="Proteomes" id="UP000005640">
    <property type="component" value="Chromosome 14"/>
</dbReference>
<dbReference type="RNAct" id="Q9BVV6">
    <property type="molecule type" value="protein"/>
</dbReference>
<dbReference type="Bgee" id="ENSG00000100578">
    <property type="expression patterns" value="Expressed in male germ line stem cell (sensu Vertebrata) in testis and 164 other cell types or tissues"/>
</dbReference>
<dbReference type="ExpressionAtlas" id="Q9BVV6">
    <property type="expression patterns" value="baseline and differential"/>
</dbReference>
<dbReference type="GO" id="GO:0005814">
    <property type="term" value="C:centriole"/>
    <property type="evidence" value="ECO:0000318"/>
    <property type="project" value="GO_Central"/>
</dbReference>
<dbReference type="GO" id="GO:0005813">
    <property type="term" value="C:centrosome"/>
    <property type="evidence" value="ECO:0000314"/>
    <property type="project" value="UniProtKB"/>
</dbReference>
<dbReference type="GO" id="GO:0036064">
    <property type="term" value="C:ciliary basal body"/>
    <property type="evidence" value="ECO:0000314"/>
    <property type="project" value="MGI"/>
</dbReference>
<dbReference type="GO" id="GO:0005737">
    <property type="term" value="C:cytoplasm"/>
    <property type="evidence" value="ECO:0007669"/>
    <property type="project" value="UniProtKB-KW"/>
</dbReference>
<dbReference type="GO" id="GO:0001917">
    <property type="term" value="C:photoreceptor inner segment"/>
    <property type="evidence" value="ECO:0007669"/>
    <property type="project" value="UniProtKB-SubCell"/>
</dbReference>
<dbReference type="GO" id="GO:0060271">
    <property type="term" value="P:cilium assembly"/>
    <property type="evidence" value="ECO:0000315"/>
    <property type="project" value="MGI"/>
</dbReference>
<dbReference type="GO" id="GO:0070201">
    <property type="term" value="P:regulation of establishment of protein localization"/>
    <property type="evidence" value="ECO:0000315"/>
    <property type="project" value="MGI"/>
</dbReference>
<dbReference type="GO" id="GO:0007224">
    <property type="term" value="P:smoothened signaling pathway"/>
    <property type="evidence" value="ECO:0000250"/>
    <property type="project" value="UniProtKB"/>
</dbReference>
<dbReference type="InterPro" id="IPR029246">
    <property type="entry name" value="TALPID3"/>
</dbReference>
<dbReference type="PANTHER" id="PTHR15721">
    <property type="entry name" value="KIAA0586 PROTEIN"/>
    <property type="match status" value="1"/>
</dbReference>
<dbReference type="PANTHER" id="PTHR15721:SF2">
    <property type="entry name" value="PROTEIN TALPID3"/>
    <property type="match status" value="1"/>
</dbReference>
<dbReference type="Pfam" id="PF15324">
    <property type="entry name" value="TALPID3"/>
    <property type="match status" value="1"/>
</dbReference>
<keyword id="KW-0025">Alternative splicing</keyword>
<keyword id="KW-0966">Cell projection</keyword>
<keyword id="KW-1186">Ciliopathy</keyword>
<keyword id="KW-0970">Cilium biogenesis/degradation</keyword>
<keyword id="KW-0175">Coiled coil</keyword>
<keyword id="KW-0963">Cytoplasm</keyword>
<keyword id="KW-0206">Cytoskeleton</keyword>
<keyword id="KW-0225">Disease variant</keyword>
<keyword id="KW-0979">Joubert syndrome</keyword>
<keyword id="KW-0597">Phosphoprotein</keyword>
<keyword id="KW-1267">Proteomics identification</keyword>
<keyword id="KW-1185">Reference proteome</keyword>
<reference key="1">
    <citation type="submission" date="2003-08" db="EMBL/GenBank/DDBJ databases">
        <title>Cloning an isoform of KIAA0586 gene related to spermatogenesis.</title>
        <authorList>
            <person name="Zhen Y."/>
            <person name="Huo R."/>
            <person name="Lu L."/>
            <person name="Xu M."/>
            <person name="Yin L.L."/>
            <person name="Xu Z.Y."/>
            <person name="Li J.M."/>
            <person name="Zhou Z.M."/>
            <person name="Sha J.H."/>
        </authorList>
    </citation>
    <scope>NUCLEOTIDE SEQUENCE [MRNA] (ISOFORM 4)</scope>
    <scope>VARIANT PRO-828</scope>
</reference>
<reference key="2">
    <citation type="journal article" date="1998" name="DNA Res.">
        <title>Prediction of the coding sequences of unidentified human genes. IX. The complete sequences of 100 new cDNA clones from brain which can code for large proteins in vitro.</title>
        <authorList>
            <person name="Nagase T."/>
            <person name="Ishikawa K."/>
            <person name="Miyajima N."/>
            <person name="Tanaka A."/>
            <person name="Kotani H."/>
            <person name="Nomura N."/>
            <person name="Ohara O."/>
        </authorList>
    </citation>
    <scope>NUCLEOTIDE SEQUENCE [LARGE SCALE MRNA] (ISOFORM 1)</scope>
    <scope>VARIANT PRO-828</scope>
    <source>
        <tissue>Brain</tissue>
    </source>
</reference>
<reference key="3">
    <citation type="journal article" date="2004" name="Nat. Genet.">
        <title>Complete sequencing and characterization of 21,243 full-length human cDNAs.</title>
        <authorList>
            <person name="Ota T."/>
            <person name="Suzuki Y."/>
            <person name="Nishikawa T."/>
            <person name="Otsuki T."/>
            <person name="Sugiyama T."/>
            <person name="Irie R."/>
            <person name="Wakamatsu A."/>
            <person name="Hayashi K."/>
            <person name="Sato H."/>
            <person name="Nagai K."/>
            <person name="Kimura K."/>
            <person name="Makita H."/>
            <person name="Sekine M."/>
            <person name="Obayashi M."/>
            <person name="Nishi T."/>
            <person name="Shibahara T."/>
            <person name="Tanaka T."/>
            <person name="Ishii S."/>
            <person name="Yamamoto J."/>
            <person name="Saito K."/>
            <person name="Kawai Y."/>
            <person name="Isono Y."/>
            <person name="Nakamura Y."/>
            <person name="Nagahari K."/>
            <person name="Murakami K."/>
            <person name="Yasuda T."/>
            <person name="Iwayanagi T."/>
            <person name="Wagatsuma M."/>
            <person name="Shiratori A."/>
            <person name="Sudo H."/>
            <person name="Hosoiri T."/>
            <person name="Kaku Y."/>
            <person name="Kodaira H."/>
            <person name="Kondo H."/>
            <person name="Sugawara M."/>
            <person name="Takahashi M."/>
            <person name="Kanda K."/>
            <person name="Yokoi T."/>
            <person name="Furuya T."/>
            <person name="Kikkawa E."/>
            <person name="Omura Y."/>
            <person name="Abe K."/>
            <person name="Kamihara K."/>
            <person name="Katsuta N."/>
            <person name="Sato K."/>
            <person name="Tanikawa M."/>
            <person name="Yamazaki M."/>
            <person name="Ninomiya K."/>
            <person name="Ishibashi T."/>
            <person name="Yamashita H."/>
            <person name="Murakawa K."/>
            <person name="Fujimori K."/>
            <person name="Tanai H."/>
            <person name="Kimata M."/>
            <person name="Watanabe M."/>
            <person name="Hiraoka S."/>
            <person name="Chiba Y."/>
            <person name="Ishida S."/>
            <person name="Ono Y."/>
            <person name="Takiguchi S."/>
            <person name="Watanabe S."/>
            <person name="Yosida M."/>
            <person name="Hotuta T."/>
            <person name="Kusano J."/>
            <person name="Kanehori K."/>
            <person name="Takahashi-Fujii A."/>
            <person name="Hara H."/>
            <person name="Tanase T.-O."/>
            <person name="Nomura Y."/>
            <person name="Togiya S."/>
            <person name="Komai F."/>
            <person name="Hara R."/>
            <person name="Takeuchi K."/>
            <person name="Arita M."/>
            <person name="Imose N."/>
            <person name="Musashino K."/>
            <person name="Yuuki H."/>
            <person name="Oshima A."/>
            <person name="Sasaki N."/>
            <person name="Aotsuka S."/>
            <person name="Yoshikawa Y."/>
            <person name="Matsunawa H."/>
            <person name="Ichihara T."/>
            <person name="Shiohata N."/>
            <person name="Sano S."/>
            <person name="Moriya S."/>
            <person name="Momiyama H."/>
            <person name="Satoh N."/>
            <person name="Takami S."/>
            <person name="Terashima Y."/>
            <person name="Suzuki O."/>
            <person name="Nakagawa S."/>
            <person name="Senoh A."/>
            <person name="Mizoguchi H."/>
            <person name="Goto Y."/>
            <person name="Shimizu F."/>
            <person name="Wakebe H."/>
            <person name="Hishigaki H."/>
            <person name="Watanabe T."/>
            <person name="Sugiyama A."/>
            <person name="Takemoto M."/>
            <person name="Kawakami B."/>
            <person name="Yamazaki M."/>
            <person name="Watanabe K."/>
            <person name="Kumagai A."/>
            <person name="Itakura S."/>
            <person name="Fukuzumi Y."/>
            <person name="Fujimori Y."/>
            <person name="Komiyama M."/>
            <person name="Tashiro H."/>
            <person name="Tanigami A."/>
            <person name="Fujiwara T."/>
            <person name="Ono T."/>
            <person name="Yamada K."/>
            <person name="Fujii Y."/>
            <person name="Ozaki K."/>
            <person name="Hirao M."/>
            <person name="Ohmori Y."/>
            <person name="Kawabata A."/>
            <person name="Hikiji T."/>
            <person name="Kobatake N."/>
            <person name="Inagaki H."/>
            <person name="Ikema Y."/>
            <person name="Okamoto S."/>
            <person name="Okitani R."/>
            <person name="Kawakami T."/>
            <person name="Noguchi S."/>
            <person name="Itoh T."/>
            <person name="Shigeta K."/>
            <person name="Senba T."/>
            <person name="Matsumura K."/>
            <person name="Nakajima Y."/>
            <person name="Mizuno T."/>
            <person name="Morinaga M."/>
            <person name="Sasaki M."/>
            <person name="Togashi T."/>
            <person name="Oyama M."/>
            <person name="Hata H."/>
            <person name="Watanabe M."/>
            <person name="Komatsu T."/>
            <person name="Mizushima-Sugano J."/>
            <person name="Satoh T."/>
            <person name="Shirai Y."/>
            <person name="Takahashi Y."/>
            <person name="Nakagawa K."/>
            <person name="Okumura K."/>
            <person name="Nagase T."/>
            <person name="Nomura N."/>
            <person name="Kikuchi H."/>
            <person name="Masuho Y."/>
            <person name="Yamashita R."/>
            <person name="Nakai K."/>
            <person name="Yada T."/>
            <person name="Nakamura Y."/>
            <person name="Ohara O."/>
            <person name="Isogai T."/>
            <person name="Sugano S."/>
        </authorList>
    </citation>
    <scope>NUCLEOTIDE SEQUENCE [LARGE SCALE MRNA] (ISOFORM 3)</scope>
    <scope>VARIANT PRO-828</scope>
    <source>
        <tissue>Testis</tissue>
    </source>
</reference>
<reference key="4">
    <citation type="journal article" date="2003" name="Nature">
        <title>The DNA sequence and analysis of human chromosome 14.</title>
        <authorList>
            <person name="Heilig R."/>
            <person name="Eckenberg R."/>
            <person name="Petit J.-L."/>
            <person name="Fonknechten N."/>
            <person name="Da Silva C."/>
            <person name="Cattolico L."/>
            <person name="Levy M."/>
            <person name="Barbe V."/>
            <person name="De Berardinis V."/>
            <person name="Ureta-Vidal A."/>
            <person name="Pelletier E."/>
            <person name="Vico V."/>
            <person name="Anthouard V."/>
            <person name="Rowen L."/>
            <person name="Madan A."/>
            <person name="Qin S."/>
            <person name="Sun H."/>
            <person name="Du H."/>
            <person name="Pepin K."/>
            <person name="Artiguenave F."/>
            <person name="Robert C."/>
            <person name="Cruaud C."/>
            <person name="Bruels T."/>
            <person name="Jaillon O."/>
            <person name="Friedlander L."/>
            <person name="Samson G."/>
            <person name="Brottier P."/>
            <person name="Cure S."/>
            <person name="Segurens B."/>
            <person name="Aniere F."/>
            <person name="Samain S."/>
            <person name="Crespeau H."/>
            <person name="Abbasi N."/>
            <person name="Aiach N."/>
            <person name="Boscus D."/>
            <person name="Dickhoff R."/>
            <person name="Dors M."/>
            <person name="Dubois I."/>
            <person name="Friedman C."/>
            <person name="Gouyvenoux M."/>
            <person name="James R."/>
            <person name="Madan A."/>
            <person name="Mairey-Estrada B."/>
            <person name="Mangenot S."/>
            <person name="Martins N."/>
            <person name="Menard M."/>
            <person name="Oztas S."/>
            <person name="Ratcliffe A."/>
            <person name="Shaffer T."/>
            <person name="Trask B."/>
            <person name="Vacherie B."/>
            <person name="Bellemere C."/>
            <person name="Belser C."/>
            <person name="Besnard-Gonnet M."/>
            <person name="Bartol-Mavel D."/>
            <person name="Boutard M."/>
            <person name="Briez-Silla S."/>
            <person name="Combette S."/>
            <person name="Dufosse-Laurent V."/>
            <person name="Ferron C."/>
            <person name="Lechaplais C."/>
            <person name="Louesse C."/>
            <person name="Muselet D."/>
            <person name="Magdelenat G."/>
            <person name="Pateau E."/>
            <person name="Petit E."/>
            <person name="Sirvain-Trukniewicz P."/>
            <person name="Trybou A."/>
            <person name="Vega-Czarny N."/>
            <person name="Bataille E."/>
            <person name="Bluet E."/>
            <person name="Bordelais I."/>
            <person name="Dubois M."/>
            <person name="Dumont C."/>
            <person name="Guerin T."/>
            <person name="Haffray S."/>
            <person name="Hammadi R."/>
            <person name="Muanga J."/>
            <person name="Pellouin V."/>
            <person name="Robert D."/>
            <person name="Wunderle E."/>
            <person name="Gauguet G."/>
            <person name="Roy A."/>
            <person name="Sainte-Marthe L."/>
            <person name="Verdier J."/>
            <person name="Verdier-Discala C."/>
            <person name="Hillier L.W."/>
            <person name="Fulton L."/>
            <person name="McPherson J."/>
            <person name="Matsuda F."/>
            <person name="Wilson R."/>
            <person name="Scarpelli C."/>
            <person name="Gyapay G."/>
            <person name="Wincker P."/>
            <person name="Saurin W."/>
            <person name="Quetier F."/>
            <person name="Waterston R."/>
            <person name="Hood L."/>
            <person name="Weissenbach J."/>
        </authorList>
    </citation>
    <scope>NUCLEOTIDE SEQUENCE [LARGE SCALE GENOMIC DNA]</scope>
</reference>
<reference key="5">
    <citation type="submission" date="2005-07" db="EMBL/GenBank/DDBJ databases">
        <authorList>
            <person name="Mural R.J."/>
            <person name="Istrail S."/>
            <person name="Sutton G.G."/>
            <person name="Florea L."/>
            <person name="Halpern A.L."/>
            <person name="Mobarry C.M."/>
            <person name="Lippert R."/>
            <person name="Walenz B."/>
            <person name="Shatkay H."/>
            <person name="Dew I."/>
            <person name="Miller J.R."/>
            <person name="Flanigan M.J."/>
            <person name="Edwards N.J."/>
            <person name="Bolanos R."/>
            <person name="Fasulo D."/>
            <person name="Halldorsson B.V."/>
            <person name="Hannenhalli S."/>
            <person name="Turner R."/>
            <person name="Yooseph S."/>
            <person name="Lu F."/>
            <person name="Nusskern D.R."/>
            <person name="Shue B.C."/>
            <person name="Zheng X.H."/>
            <person name="Zhong F."/>
            <person name="Delcher A.L."/>
            <person name="Huson D.H."/>
            <person name="Kravitz S.A."/>
            <person name="Mouchard L."/>
            <person name="Reinert K."/>
            <person name="Remington K.A."/>
            <person name="Clark A.G."/>
            <person name="Waterman M.S."/>
            <person name="Eichler E.E."/>
            <person name="Adams M.D."/>
            <person name="Hunkapiller M.W."/>
            <person name="Myers E.W."/>
            <person name="Venter J.C."/>
        </authorList>
    </citation>
    <scope>NUCLEOTIDE SEQUENCE [LARGE SCALE GENOMIC DNA]</scope>
    <scope>VARIANT PRO-828</scope>
</reference>
<reference key="6">
    <citation type="journal article" date="2004" name="Genome Res.">
        <title>The status, quality, and expansion of the NIH full-length cDNA project: the Mammalian Gene Collection (MGC).</title>
        <authorList>
            <consortium name="The MGC Project Team"/>
        </authorList>
    </citation>
    <scope>NUCLEOTIDE SEQUENCE [LARGE SCALE MRNA] (ISOFORMS 1 AND 2)</scope>
    <scope>VARIANT PRO-828</scope>
    <source>
        <tissue>Placenta</tissue>
        <tissue>Skin</tissue>
    </source>
</reference>
<reference key="7">
    <citation type="journal article" date="2009" name="Development">
        <title>The Talpid3 gene (KIAA0586) encodes a centrosomal protein that is essential for primary cilia formation.</title>
        <authorList>
            <person name="Yin Y."/>
            <person name="Bangs F."/>
            <person name="Paton I.R."/>
            <person name="Prescott A."/>
            <person name="James J."/>
            <person name="Davey M.G."/>
            <person name="Whitley P."/>
            <person name="Genikhovich G."/>
            <person name="Technau U."/>
            <person name="Burt D.W."/>
            <person name="Tickle C."/>
        </authorList>
    </citation>
    <scope>SUBCELLULAR LOCATION</scope>
</reference>
<reference key="8">
    <citation type="journal article" date="2013" name="J. Proteome Res.">
        <title>Toward a comprehensive characterization of a human cancer cell phosphoproteome.</title>
        <authorList>
            <person name="Zhou H."/>
            <person name="Di Palma S."/>
            <person name="Preisinger C."/>
            <person name="Peng M."/>
            <person name="Polat A.N."/>
            <person name="Heck A.J."/>
            <person name="Mohammed S."/>
        </authorList>
    </citation>
    <scope>PHOSPHORYLATION [LARGE SCALE ANALYSIS] AT SER-406</scope>
    <scope>IDENTIFICATION BY MASS SPECTROMETRY [LARGE SCALE ANALYSIS]</scope>
    <source>
        <tissue>Erythroleukemia</tissue>
    </source>
</reference>
<reference key="9">
    <citation type="journal article" date="2014" name="J. Cell Biol.">
        <title>The CP110-interacting proteins Talpid3 and Cep290 play overlapping and distinct roles in cilia assembly.</title>
        <authorList>
            <person name="Kobayashi T."/>
            <person name="Kim S."/>
            <person name="Lin Y.C."/>
            <person name="Inoue T."/>
            <person name="Dynlacht B.D."/>
        </authorList>
    </citation>
    <scope>FUNCTION</scope>
    <scope>INTERACTION WITH CCP110; CEP290; CEP97 AND KIF24</scope>
</reference>
<reference key="10">
    <citation type="journal article" date="2015" name="Am. J. Hum. Genet.">
        <title>Mutations in KIAA0586 cause lethal ciliopathies ranging from a hydrolethalus phenotype to short-rib polydactyly syndrome.</title>
        <authorList>
            <person name="Alby C."/>
            <person name="Piquand K."/>
            <person name="Huber C."/>
            <person name="Megarbane A."/>
            <person name="Ichkou A."/>
            <person name="Legendre M."/>
            <person name="Pelluard F."/>
            <person name="Encha-Ravazi F."/>
            <person name="Abi-Tayeh G."/>
            <person name="Bessieres B."/>
            <person name="El Chehadeh-Djebbar S."/>
            <person name="Laurent N."/>
            <person name="Faivre L."/>
            <person name="Sztriha L."/>
            <person name="Zombor M."/>
            <person name="Szabo H."/>
            <person name="Failler M."/>
            <person name="Garfa-Traore M."/>
            <person name="Bole C."/>
            <person name="Nitschke P."/>
            <person name="Nizon M."/>
            <person name="Elkhartoufi N."/>
            <person name="Clerget-Darpoux F."/>
            <person name="Munnich A."/>
            <person name="Lyonnet S."/>
            <person name="Vekemans M."/>
            <person name="Saunier S."/>
            <person name="Cormier-Daire V."/>
            <person name="Attie-Bitach T."/>
            <person name="Thomas S."/>
        </authorList>
    </citation>
    <scope>DEVELOPMENTAL STAGE</scope>
    <scope>INVOLVEMENT IN SRTD14</scope>
</reference>
<reference key="11">
    <citation type="journal article" date="2015" name="Elife">
        <title>Functional genome-wide siRNA screen identifies KIAA0586 as mutated in Joubert syndrome.</title>
        <authorList>
            <person name="Roosing S."/>
            <person name="Hofree M."/>
            <person name="Kim S."/>
            <person name="Scott E."/>
            <person name="Copeland B."/>
            <person name="Romani M."/>
            <person name="Silhavy J.L."/>
            <person name="Rosti R.O."/>
            <person name="Schroth J."/>
            <person name="Mazza T."/>
            <person name="Miccinilli E."/>
            <person name="Zaki M.S."/>
            <person name="Swoboda K.J."/>
            <person name="Milisa-Drautz J."/>
            <person name="Dobyns W.B."/>
            <person name="Mikati M.A."/>
            <person name="Incecik F."/>
            <person name="Azam M."/>
            <person name="Borgatti R."/>
            <person name="Romaniello R."/>
            <person name="Boustany R.M."/>
            <person name="Clericuzio C.L."/>
            <person name="D'Arrigo S."/>
            <person name="Stroemme P."/>
            <person name="Boltshauser E."/>
            <person name="Stanzial F."/>
            <person name="Mirabelli-Badenier M."/>
            <person name="Moroni I."/>
            <person name="Bertini E."/>
            <person name="Emma F."/>
            <person name="Steinlin M."/>
            <person name="Hildebrandt F."/>
            <person name="Johnson C.A."/>
            <person name="Freilinger M."/>
            <person name="Vaux K.K."/>
            <person name="Gabriel S.B."/>
            <person name="Aza-Blanc P."/>
            <person name="Heynen-Genel S."/>
            <person name="Ideker T."/>
            <person name="Dynlacht B.D."/>
            <person name="Lee J.E."/>
            <person name="Valente E.M."/>
            <person name="Kim J."/>
            <person name="Gleeson J.G."/>
        </authorList>
    </citation>
    <scope>INVOLVEMENT IN JBTS23</scope>
</reference>
<reference key="12">
    <citation type="journal article" date="2015" name="Elife">
        <title>TALPID3 controls centrosome and cell polarity and the human ortholog KIAA0586 is mutated in Joubert syndrome (JBTS23).</title>
        <authorList>
            <person name="Stephen L.A."/>
            <person name="Tawamie H."/>
            <person name="Davis G.M."/>
            <person name="Tebbe L."/>
            <person name="Nuernberg P."/>
            <person name="Nuernberg G."/>
            <person name="Thiele H."/>
            <person name="Thoenes M."/>
            <person name="Boltshauser E."/>
            <person name="Uebe S."/>
            <person name="Rompel O."/>
            <person name="Reis A."/>
            <person name="Ekici A.B."/>
            <person name="McTeir L."/>
            <person name="Fraser A.M."/>
            <person name="Hall E.A."/>
            <person name="Mill P."/>
            <person name="Daudet N."/>
            <person name="Cross C."/>
            <person name="Wolfrum U."/>
            <person name="Jamra R.A."/>
            <person name="Davey M.G."/>
            <person name="Bolz H.J."/>
        </authorList>
    </citation>
    <scope>SUBCELLULAR LOCATION</scope>
    <scope>INVOLVEMENT IN JBTS23</scope>
</reference>
<reference key="13">
    <citation type="journal article" date="2015" name="Hum. Mutat.">
        <title>KIAA0586 is Mutated in Joubert Syndrome.</title>
        <authorList>
            <consortium name="University of Washington Center for Mendelian Genomics"/>
            <person name="Bachmann-Gagescu R."/>
            <person name="Phelps I.G."/>
            <person name="Dempsey J.C."/>
            <person name="Sharma V.A."/>
            <person name="Ishak G.E."/>
            <person name="Boyle E.A."/>
            <person name="Wilson M."/>
            <person name="Marques Lourenco C."/>
            <person name="Arslan M."/>
            <person name="Shendure J."/>
            <person name="Doherty D."/>
        </authorList>
    </citation>
    <scope>INVOLVEMENT IN JBTS23</scope>
    <scope>VARIANT JBTS23 VAL-566</scope>
</reference>
<reference key="14">
    <citation type="journal article" date="2015" name="J. Med. Genet.">
        <title>Mutations in human homologue of chicken talpid3 gene (KIAA0586) cause a hybrid ciliopathy with overlapping features of Jeune and Joubert syndromes.</title>
        <authorList>
            <consortium name="NISC Comparative Sequencing Program"/>
            <person name="Malicdan M.C."/>
            <person name="Vilboux T."/>
            <person name="Stephen J."/>
            <person name="Maglic D."/>
            <person name="Mian L."/>
            <person name="Konzman D."/>
            <person name="Guo J."/>
            <person name="Yildirimli D."/>
            <person name="Bryant J."/>
            <person name="Fischer R."/>
            <person name="Zein W.M."/>
            <person name="Snow J."/>
            <person name="Vemulapalli M."/>
            <person name="Mullikin J.C."/>
            <person name="Toro C."/>
            <person name="Solomon B.D."/>
            <person name="Niederhuber J.E."/>
            <person name="Gahl W.A."/>
            <person name="Gunay-Aygun M."/>
        </authorList>
    </citation>
    <scope>TISSUE SPECIFICITY</scope>
    <scope>INVOLVEMENT IN JBTS23</scope>
</reference>
<reference key="15">
    <citation type="journal article" date="2015" name="J. Med. Genet.">
        <title>A human laterality disorder caused by a homozygous deleterious mutation in MMP21.</title>
        <authorList>
            <person name="Perles Z."/>
            <person name="Moon S."/>
            <person name="Ta-Shma A."/>
            <person name="Yaacov B."/>
            <person name="Francescatto L."/>
            <person name="Edvardson S."/>
            <person name="Rein A.J."/>
            <person name="Elpeleg O."/>
            <person name="Katsanis N."/>
        </authorList>
    </citation>
    <scope>INVOLVEMENT IN JBTS23</scope>
    <scope>VARIANT JBTS23 LYS-403</scope>
</reference>
<name>TALD3_HUMAN</name>
<protein>
    <recommendedName>
        <fullName>Protein TALPID3</fullName>
    </recommendedName>
</protein>
<organism>
    <name type="scientific">Homo sapiens</name>
    <name type="common">Human</name>
    <dbReference type="NCBI Taxonomy" id="9606"/>
    <lineage>
        <taxon>Eukaryota</taxon>
        <taxon>Metazoa</taxon>
        <taxon>Chordata</taxon>
        <taxon>Craniata</taxon>
        <taxon>Vertebrata</taxon>
        <taxon>Euteleostomi</taxon>
        <taxon>Mammalia</taxon>
        <taxon>Eutheria</taxon>
        <taxon>Euarchontoglires</taxon>
        <taxon>Primates</taxon>
        <taxon>Haplorrhini</taxon>
        <taxon>Catarrhini</taxon>
        <taxon>Hominidae</taxon>
        <taxon>Homo</taxon>
    </lineage>
</organism>
<proteinExistence type="evidence at protein level"/>
<sequence>MPVKRLREVVSQNHGDHLVLLKDELPCVPPALSANKRLPVGTGTSLNGTSRGSSDLTSARNCYQPLLENPMVSESDFSKDVAVQVLPLDKIEENNKQKANDIFISQYTMGQKDALRTVLKQKAQSMPVFKEVKVHLLEDAGIEKDAVTQETRISPSGIDSATTVAAATAAAIATAAPLIKVQSDLEAKVNSVTELLSKLQETDKHLQRVTEQQTSIQRKQEKLHCHDHEKQMNVFMEQHIRHLEKLQQQQIDIQTHFISAALKTSSFQPVSMPSSRAVEKYSVKPEHPNLGSCNPSLYNTFASKQAPLKEVEDTSFDKQKSPLETPAPRRFAPVPVSRDDELSKRENLLEEKENMEVSCHRGNVRLLEQILNNNDSLTRKSESSNTTSLTRSKIGWTPEKTNRFPSCEELETTKVTMQKSDDVLHDLGQKEKETNSMVQPKESLSMLKLPDLPQNSVKLQTTNTTRSVLKDAEKILRGVQNNKKVLEENLEAIIRAKDGAAMYSLINALSTNREMSEKIRIRKTVDEWIKTISAEIQDELSRTDYEQKRFDQKNQRTKKGQNMTKDIRTNTQDKTVNKSVIPRKHSQKQIEEHFRNLPMRGMPASSLQKERKEGLLKATTVIQDEDYMLQVYGKPVYQGHRSTLKKGPYLRFNSPSPKSRPQRPKVIERVKGTKVKSIRTQTDFYATKPKKMDSKMKHSVPVLPHGDQQYLFSPSREMPTFSGTLEGHLIPMAILLGQTQSNSDTMPPAGVIVSKPHPVTVTTSIPPSSRKVETGVKKPNIAIVEMKSEKKDPPQLTVQVLPSVDIDSISNSSADVLSPLSSPKEASLPPVQTWIKTPEIMKVDEEEVKFPGTNFDEIIDVIQEEEKCDEIPDSEPILEFNRSVKADSTKYNGPPFPPVASTFQPTADILDKVIERKETLENSLIQWVEQEIMSRIISGLFPVQQQIAPSISVSVSETSEPLTSDIVEGTSSGALQLFVDAGVPVNSNVIKHFVNEALAETIAVMLGDREAKKQGPVATGVSGDASTNETYLPARVCTPLPTPQPTPPCSPSSPAKECVLVKTPDSSPCDSDHDMAFPVKEICAEKGDDMPAIMLVNTPTVTPTTTPPPAAAVFTPTLSDISIDKLKVSSPELPKPWGDGDLPLEEENPNSPQEELHPRAIVMSVAKDEEPESMDFPAQPPPPEPVPFMPFPAGTKAPSPSQMPGSDSSTLESTLSVTVTETETLDKPISEGEILFSCGQKLAPKILEDIGLYLTNLNDSLSSTLHDAVEMEDDPPSEGQVIRMSHKKFHADAILSFAKQNQESAVSQQAVYHSEDLENSVGELSEGQRPQLTAAAENILMGHSLYMQPPVTNTQSLDQQCDPKPLSRQFDTVSGSIYEDSCASHGPMSLGELELEPNSKLVLPTTLLTAQENDVNLPVAAEDFSQYQLKQNQDVKQVEHKPSQSYLRVRNKSDIAPSQQQVSPGDMDRTQIELNPYLTCVFSGGKAVPLSASQMPPAKMSVMLPSVNLEDCSQSLSLSTMQEDMESSGADTF</sequence>
<comment type="function">
    <text evidence="2 3 9">Required for ciliogenesis and sonic hedgehog/SHH signaling. Required for the centrosomal recruitment of RAB8A and for the targeting of centriole satellite proteins to centrosomes such as of PCM1. May play a role in early ciliogenesis in the disappearance of centriolar satellites that preceeds ciliary vesicle formation (PubMed:24421332). Involved in regulation of cell intracellular organization. Involved in regulation of cell polarity (By similarity). Required for asymmetrical localization of CEP120 to daughter centrioles (By similarity).</text>
</comment>
<comment type="subunit">
    <text evidence="9">Interacts with CCP110, CEP290, CEP97, KIF24.</text>
</comment>
<comment type="interaction">
    <interactant intactId="EBI-11286926">
        <id>Q9BVV6</id>
    </interactant>
    <interactant intactId="EBI-1566217">
        <id>O43303</id>
        <label>CCP110</label>
    </interactant>
    <organismsDiffer>false</organismsDiffer>
    <experiments>6</experiments>
</comment>
<comment type="interaction">
    <interactant intactId="EBI-11286926">
        <id>Q9BVV6</id>
    </interactant>
    <interactant intactId="EBI-742887">
        <id>Q8TAP6</id>
        <label>CEP76</label>
    </interactant>
    <organismsDiffer>false</organismsDiffer>
    <experiments>2</experiments>
</comment>
<comment type="subcellular location">
    <subcellularLocation>
        <location evidence="8">Cytoplasm</location>
        <location evidence="8">Cytoskeleton</location>
        <location evidence="8">Microtubule organizing center</location>
        <location evidence="8">Centrosome</location>
    </subcellularLocation>
    <subcellularLocation>
        <location evidence="14">Photoreceptor inner segment</location>
    </subcellularLocation>
    <subcellularLocation>
        <location evidence="9 14">Cytoplasm</location>
        <location evidence="9 14">Cytoskeleton</location>
        <location evidence="9 14">Microtubule organizing center</location>
        <location evidence="9 14">Centrosome</location>
        <location evidence="9 14">Centriole</location>
    </subcellularLocation>
    <subcellularLocation>
        <location evidence="14">Cytoplasm</location>
        <location evidence="14">Cytoskeleton</location>
        <location evidence="14">Cilium basal body</location>
    </subcellularLocation>
    <text evidence="9 14">Forms a ring-like structure at the extreme distal end of both mother and daughter centrioles (PubMed:24421332). In photoreceptor cells localized to the joint between the inner and outer segments, specifically localized at the mother centriole (basal body) and the adjacent centriole as well as between the two centrioles but not in the connecting cilium (PubMed:26386247).</text>
</comment>
<comment type="alternative products">
    <event type="alternative splicing"/>
    <isoform>
        <id>Q9BVV6-1</id>
        <name>1</name>
        <sequence type="displayed"/>
    </isoform>
    <isoform>
        <id>Q9BVV6-2</id>
        <name>2</name>
        <sequence type="described" ref="VSP_040642 VSP_040643"/>
    </isoform>
    <isoform>
        <id>Q9BVV6-3</id>
        <name>3</name>
        <sequence type="described" ref="VSP_046005 VSP_046006 VSP_046007"/>
    </isoform>
    <isoform>
        <id>Q9BVV6-4</id>
        <name>4</name>
        <sequence type="described" ref="VSP_046387 VSP_046006"/>
    </isoform>
</comment>
<comment type="tissue specificity">
    <text evidence="13 14">Ubiquitously expressed (PubMed:26386044). Expressed in photoreceptor cells (at protein level) (PubMed:26386247).</text>
</comment>
<comment type="developmental stage">
    <text evidence="12">Expressed as early as 6 weeks of gestation (Carnegie stage 16). Ubiquitously expressed during fetal development and postnatally in all adult tissues tested.</text>
</comment>
<comment type="disease" evidence="10 11 13 14 15">
    <disease id="DI-04495">
        <name>Joubert syndrome 23</name>
        <acronym>JBTS23</acronym>
        <description>A mild form of Joubert syndrome, a disorder presenting with cerebellar ataxia, oculomotor apraxia, hypotonia, neonatal breathing abnormalities and psychomotor delay. Neuroradiologically, it is characterized by cerebellar vermian hypoplasia/aplasia, thickened and reoriented superior cerebellar peduncles, and an abnormally large interpeduncular fossa, giving the appearance of a molar tooth on transaxial slices (molar tooth sign). Additional variable features include retinal dystrophy, renal disease, liver fibrosis, and polydactyly.</description>
        <dbReference type="MIM" id="616490"/>
    </disease>
    <text evidence="13">The disease is caused by variants affecting the gene represented in this entry. Some patients with biallelic KIAA0586 mutations manifest a disease phenotype with features of Joubert syndrome and additional findings of a small thorax and respiratory problems consistent with Jeune syndrome (Joubert-Jeune ciliopathy).</text>
</comment>
<comment type="disease" evidence="12">
    <disease id="DI-04524">
        <name>Short-rib thoracic dysplasia 14 with polydactyly</name>
        <acronym>SRTD14</acronym>
        <description>A form of short-rib thoracic dysplasia, a group of autosomal recessive ciliopathies that are characterized by a constricted thoracic cage, short ribs, shortened tubular bones, and a 'trident' appearance of the acetabular roof. Polydactyly is variably present. Non-skeletal involvement can include cleft lip/palate as well as anomalies of major organs such as the brain, eye, heart, kidneys, liver, pancreas, intestines, and genitalia. Some forms of the disease are lethal in the neonatal period due to respiratory insufficiency secondary to a severely restricted thoracic cage, whereas others are compatible with life. Disease spectrum encompasses Ellis-van Creveld syndrome, asphyxiating thoracic dystrophy (Jeune syndrome), Mainzer-Saldino syndrome, and short rib-polydactyly syndrome.</description>
        <dbReference type="MIM" id="616546"/>
    </disease>
    <text>The disease is caused by variants affecting the gene represented in this entry.</text>
</comment>
<comment type="similarity">
    <text evidence="22">Belongs to the TALPID3 family.</text>
</comment>
<comment type="sequence caution" evidence="22">
    <conflict type="erroneous initiation">
        <sequence resource="EMBL-CDS" id="BAA25512"/>
    </conflict>
    <text>Extended N-terminus.</text>
</comment>
<gene>
    <name type="primary">KIAA0586</name>
    <name type="synonym">TALPID3</name>
</gene>
<feature type="chain" id="PRO_0000050766" description="Protein TALPID3">
    <location>
        <begin position="1"/>
        <end position="1533"/>
    </location>
</feature>
<feature type="region of interest" description="Disordered" evidence="5">
    <location>
        <begin position="32"/>
        <end position="57"/>
    </location>
</feature>
<feature type="region of interest" description="Disordered" evidence="5">
    <location>
        <begin position="309"/>
        <end position="339"/>
    </location>
</feature>
<feature type="region of interest" description="Disordered" evidence="5">
    <location>
        <begin position="377"/>
        <end position="400"/>
    </location>
</feature>
<feature type="region of interest" description="Required for centrosomal localization" evidence="1">
    <location>
        <begin position="467"/>
        <end position="554"/>
    </location>
</feature>
<feature type="region of interest" description="Disordered" evidence="5">
    <location>
        <begin position="546"/>
        <end position="575"/>
    </location>
</feature>
<feature type="region of interest" description="Disordered" evidence="5">
    <location>
        <begin position="1129"/>
        <end position="1156"/>
    </location>
</feature>
<feature type="coiled-coil region" evidence="4">
    <location>
        <begin position="182"/>
        <end position="223"/>
    </location>
</feature>
<feature type="coiled-coil region" evidence="4">
    <location>
        <begin position="467"/>
        <end position="501"/>
    </location>
</feature>
<feature type="compositionally biased region" description="Polar residues" evidence="5">
    <location>
        <begin position="42"/>
        <end position="57"/>
    </location>
</feature>
<feature type="compositionally biased region" description="Basic and acidic residues" evidence="5">
    <location>
        <begin position="309"/>
        <end position="321"/>
    </location>
</feature>
<feature type="compositionally biased region" description="Polar residues" evidence="5">
    <location>
        <begin position="560"/>
        <end position="575"/>
    </location>
</feature>
<feature type="modified residue" description="Phosphoserine" evidence="23">
    <location>
        <position position="406"/>
    </location>
</feature>
<feature type="modified residue" description="Phosphothreonine" evidence="2">
    <location>
        <position position="1042"/>
    </location>
</feature>
<feature type="modified residue" description="Phosphothreonine" evidence="2">
    <location>
        <position position="1046"/>
    </location>
</feature>
<feature type="modified residue" description="Phosphoserine" evidence="2">
    <location>
        <position position="1050"/>
    </location>
</feature>
<feature type="modified residue" description="Phosphothreonine" evidence="2">
    <location>
        <position position="1063"/>
    </location>
</feature>
<feature type="modified residue" description="Phosphoserine" evidence="2">
    <location>
        <position position="1066"/>
    </location>
</feature>
<feature type="splice variant" id="VSP_046387" description="In isoform 4." evidence="21">
    <location>
        <begin position="1"/>
        <end position="70"/>
    </location>
</feature>
<feature type="splice variant" id="VSP_040642" description="In isoform 2." evidence="20">
    <original>M</original>
    <variation>MKGSEVSLEKKKKIKM</variation>
    <location>
        <position position="1"/>
    </location>
</feature>
<feature type="splice variant" id="VSP_046005" description="In isoform 3." evidence="19">
    <original>M</original>
    <variation>MFWCGTCFVTNNMKGSEVSLEKKKKIKM</variation>
    <location>
        <position position="1"/>
    </location>
</feature>
<feature type="splice variant" id="VSP_046006" description="In isoform 3 and isoform 4." evidence="19 21">
    <original>K</original>
    <variation>NVSLCLTGWSDHSGVITTHCSLYLLRLMRSSHLSLPSSWDYR</variation>
    <location>
        <position position="122"/>
    </location>
</feature>
<feature type="splice variant" id="VSP_040643" description="In isoform 2." evidence="20">
    <location>
        <begin position="538"/>
        <end position="613"/>
    </location>
</feature>
<feature type="splice variant" id="VSP_046007" description="In isoform 3." evidence="19">
    <original>GKAVPLSASQMPPAKMSVMLPSVNLEDCSQSLSLSTMQEDMESSGADT</original>
    <variation>LGVHVKKVSCIGKLGLWRFVIQIISSPRWESSATLRFTDAPCQDVSDAAVSEPRGLLSVSESQHNAGGHGVFGGRYLLNGKRQPAQCLCHW</variation>
    <location>
        <begin position="1485"/>
        <end position="1532"/>
    </location>
</feature>
<feature type="sequence variant" id="VAR_076328" description="In JBTS23; uncertain significance; dbSNP:rs772739103." evidence="15">
    <original>R</original>
    <variation>K</variation>
    <location>
        <position position="403"/>
    </location>
</feature>
<feature type="sequence variant" id="VAR_074596" description="In JBTS23." evidence="11">
    <original>D</original>
    <variation>V</variation>
    <location>
        <position position="566"/>
    </location>
</feature>
<feature type="sequence variant" id="VAR_069108" description="In dbSNP:rs1748986." evidence="6 7 16 17 18">
    <original>L</original>
    <variation>P</variation>
    <location>
        <position position="828"/>
    </location>
</feature>
<feature type="sequence conflict" description="In Ref. 2; BAA25512, 3; BAG64028, 5; EAW80740 and 6; AAH66647." evidence="22" ref="2 3 5 6">
    <original>P</original>
    <variation>A</variation>
    <location>
        <position position="1041"/>
    </location>
</feature>
<feature type="sequence conflict" description="In Ref. 3; BAG64028." evidence="22" ref="3">
    <original>L</original>
    <variation>P</variation>
    <location sequence="Q9BVV6-3">
        <position position="1568"/>
    </location>
</feature>